<comment type="function">
    <text evidence="1">Catalyzes the ferrous insertion into protoporphyrin IX.</text>
</comment>
<comment type="catalytic activity">
    <reaction evidence="1">
        <text>heme b + 2 H(+) = protoporphyrin IX + Fe(2+)</text>
        <dbReference type="Rhea" id="RHEA:22584"/>
        <dbReference type="ChEBI" id="CHEBI:15378"/>
        <dbReference type="ChEBI" id="CHEBI:29033"/>
        <dbReference type="ChEBI" id="CHEBI:57306"/>
        <dbReference type="ChEBI" id="CHEBI:60344"/>
        <dbReference type="EC" id="4.98.1.1"/>
    </reaction>
</comment>
<comment type="pathway">
    <text evidence="1">Porphyrin-containing compound metabolism; protoheme biosynthesis; protoheme from protoporphyrin-IX: step 1/1.</text>
</comment>
<comment type="subcellular location">
    <subcellularLocation>
        <location evidence="1">Cytoplasm</location>
    </subcellularLocation>
</comment>
<comment type="similarity">
    <text evidence="1">Belongs to the ferrochelatase family.</text>
</comment>
<keyword id="KW-0963">Cytoplasm</keyword>
<keyword id="KW-0350">Heme biosynthesis</keyword>
<keyword id="KW-0408">Iron</keyword>
<keyword id="KW-0456">Lyase</keyword>
<keyword id="KW-0479">Metal-binding</keyword>
<keyword id="KW-0627">Porphyrin biosynthesis</keyword>
<keyword id="KW-1185">Reference proteome</keyword>
<accession>Q888A2</accession>
<organism>
    <name type="scientific">Pseudomonas syringae pv. tomato (strain ATCC BAA-871 / DC3000)</name>
    <dbReference type="NCBI Taxonomy" id="223283"/>
    <lineage>
        <taxon>Bacteria</taxon>
        <taxon>Pseudomonadati</taxon>
        <taxon>Pseudomonadota</taxon>
        <taxon>Gammaproteobacteria</taxon>
        <taxon>Pseudomonadales</taxon>
        <taxon>Pseudomonadaceae</taxon>
        <taxon>Pseudomonas</taxon>
    </lineage>
</organism>
<proteinExistence type="inferred from homology"/>
<protein>
    <recommendedName>
        <fullName evidence="1">Ferrochelatase</fullName>
        <ecNumber evidence="1">4.98.1.1</ecNumber>
    </recommendedName>
    <alternativeName>
        <fullName evidence="1">Heme synthase</fullName>
    </alternativeName>
    <alternativeName>
        <fullName evidence="1">Protoheme ferro-lyase</fullName>
    </alternativeName>
</protein>
<name>HEMH_PSESM</name>
<sequence length="340" mass="38398">MTDHALLLVNLGSPASTQVADVRSYLNQFLMDPYVIDIPWPLRRLLVSLILIKRPEQSAHAYASIWWDEGSPLVVLSKRLQQAMKKEWSHGPVELAMRYGEPSIETVLTRLSEQGFKKVTLAPLYPQFADSTVTTVIEEAKRVVRAKSLKMQFSVLQPFYDQPEYVSALVESVRPHLEQPYDHLLLSFHGLPERHLHKRDPTGKHCLKDDCCMTAPAQVVATCYRAQCLQSAAAFAKRMGIPDGKWSVSFQSRLGRAKWIEPYTEARLDELAAQGVKKLLVMCPAFVADCIETLEEIGDRGAEQFKEAGGEELILVPCLNDDPNWAKELNRLCERAPLML</sequence>
<evidence type="ECO:0000255" key="1">
    <source>
        <dbReference type="HAMAP-Rule" id="MF_00323"/>
    </source>
</evidence>
<reference key="1">
    <citation type="journal article" date="2003" name="Proc. Natl. Acad. Sci. U.S.A.">
        <title>The complete genome sequence of the Arabidopsis and tomato pathogen Pseudomonas syringae pv. tomato DC3000.</title>
        <authorList>
            <person name="Buell C.R."/>
            <person name="Joardar V."/>
            <person name="Lindeberg M."/>
            <person name="Selengut J."/>
            <person name="Paulsen I.T."/>
            <person name="Gwinn M.L."/>
            <person name="Dodson R.J."/>
            <person name="DeBoy R.T."/>
            <person name="Durkin A.S."/>
            <person name="Kolonay J.F."/>
            <person name="Madupu R."/>
            <person name="Daugherty S.C."/>
            <person name="Brinkac L.M."/>
            <person name="Beanan M.J."/>
            <person name="Haft D.H."/>
            <person name="Nelson W.C."/>
            <person name="Davidsen T.M."/>
            <person name="Zafar N."/>
            <person name="Zhou L."/>
            <person name="Liu J."/>
            <person name="Yuan Q."/>
            <person name="Khouri H.M."/>
            <person name="Fedorova N.B."/>
            <person name="Tran B."/>
            <person name="Russell D."/>
            <person name="Berry K.J."/>
            <person name="Utterback T.R."/>
            <person name="Van Aken S.E."/>
            <person name="Feldblyum T.V."/>
            <person name="D'Ascenzo M."/>
            <person name="Deng W.-L."/>
            <person name="Ramos A.R."/>
            <person name="Alfano J.R."/>
            <person name="Cartinhour S."/>
            <person name="Chatterjee A.K."/>
            <person name="Delaney T.P."/>
            <person name="Lazarowitz S.G."/>
            <person name="Martin G.B."/>
            <person name="Schneider D.J."/>
            <person name="Tang X."/>
            <person name="Bender C.L."/>
            <person name="White O."/>
            <person name="Fraser C.M."/>
            <person name="Collmer A."/>
        </authorList>
    </citation>
    <scope>NUCLEOTIDE SEQUENCE [LARGE SCALE GENOMIC DNA]</scope>
    <source>
        <strain>ATCC BAA-871 / DC3000</strain>
    </source>
</reference>
<gene>
    <name evidence="1" type="primary">hemH</name>
    <name type="ordered locus">PSPTO_1128</name>
</gene>
<dbReference type="EC" id="4.98.1.1" evidence="1"/>
<dbReference type="EMBL" id="AE016853">
    <property type="protein sequence ID" value="AAO54657.1"/>
    <property type="molecule type" value="Genomic_DNA"/>
</dbReference>
<dbReference type="RefSeq" id="NP_790962.1">
    <property type="nucleotide sequence ID" value="NC_004578.1"/>
</dbReference>
<dbReference type="RefSeq" id="WP_005768824.1">
    <property type="nucleotide sequence ID" value="NC_004578.1"/>
</dbReference>
<dbReference type="SMR" id="Q888A2"/>
<dbReference type="STRING" id="223283.PSPTO_1128"/>
<dbReference type="DNASU" id="1182764"/>
<dbReference type="GeneID" id="1182764"/>
<dbReference type="KEGG" id="pst:PSPTO_1128"/>
<dbReference type="PATRIC" id="fig|223283.9.peg.1138"/>
<dbReference type="eggNOG" id="COG0276">
    <property type="taxonomic scope" value="Bacteria"/>
</dbReference>
<dbReference type="HOGENOM" id="CLU_018884_0_1_6"/>
<dbReference type="OrthoDB" id="9809741at2"/>
<dbReference type="PhylomeDB" id="Q888A2"/>
<dbReference type="UniPathway" id="UPA00252">
    <property type="reaction ID" value="UER00325"/>
</dbReference>
<dbReference type="Proteomes" id="UP000002515">
    <property type="component" value="Chromosome"/>
</dbReference>
<dbReference type="GO" id="GO:0005737">
    <property type="term" value="C:cytoplasm"/>
    <property type="evidence" value="ECO:0007669"/>
    <property type="project" value="UniProtKB-SubCell"/>
</dbReference>
<dbReference type="GO" id="GO:0004325">
    <property type="term" value="F:ferrochelatase activity"/>
    <property type="evidence" value="ECO:0007669"/>
    <property type="project" value="UniProtKB-UniRule"/>
</dbReference>
<dbReference type="GO" id="GO:0046872">
    <property type="term" value="F:metal ion binding"/>
    <property type="evidence" value="ECO:0007669"/>
    <property type="project" value="UniProtKB-KW"/>
</dbReference>
<dbReference type="GO" id="GO:0006783">
    <property type="term" value="P:heme biosynthetic process"/>
    <property type="evidence" value="ECO:0007669"/>
    <property type="project" value="UniProtKB-UniRule"/>
</dbReference>
<dbReference type="CDD" id="cd00419">
    <property type="entry name" value="Ferrochelatase_C"/>
    <property type="match status" value="1"/>
</dbReference>
<dbReference type="CDD" id="cd03411">
    <property type="entry name" value="Ferrochelatase_N"/>
    <property type="match status" value="1"/>
</dbReference>
<dbReference type="Gene3D" id="3.40.50.1400">
    <property type="match status" value="2"/>
</dbReference>
<dbReference type="HAMAP" id="MF_00323">
    <property type="entry name" value="Ferrochelatase"/>
    <property type="match status" value="1"/>
</dbReference>
<dbReference type="InterPro" id="IPR001015">
    <property type="entry name" value="Ferrochelatase"/>
</dbReference>
<dbReference type="InterPro" id="IPR033644">
    <property type="entry name" value="Ferrochelatase_C"/>
</dbReference>
<dbReference type="InterPro" id="IPR033659">
    <property type="entry name" value="Ferrochelatase_N"/>
</dbReference>
<dbReference type="NCBIfam" id="TIGR00109">
    <property type="entry name" value="hemH"/>
    <property type="match status" value="1"/>
</dbReference>
<dbReference type="PANTHER" id="PTHR11108">
    <property type="entry name" value="FERROCHELATASE"/>
    <property type="match status" value="1"/>
</dbReference>
<dbReference type="PANTHER" id="PTHR11108:SF1">
    <property type="entry name" value="FERROCHELATASE, MITOCHONDRIAL"/>
    <property type="match status" value="1"/>
</dbReference>
<dbReference type="Pfam" id="PF00762">
    <property type="entry name" value="Ferrochelatase"/>
    <property type="match status" value="1"/>
</dbReference>
<dbReference type="SUPFAM" id="SSF53800">
    <property type="entry name" value="Chelatase"/>
    <property type="match status" value="1"/>
</dbReference>
<feature type="chain" id="PRO_0000175186" description="Ferrochelatase">
    <location>
        <begin position="1"/>
        <end position="340"/>
    </location>
</feature>
<feature type="binding site" evidence="1">
    <location>
        <position position="189"/>
    </location>
    <ligand>
        <name>Fe cation</name>
        <dbReference type="ChEBI" id="CHEBI:24875"/>
    </ligand>
</feature>
<feature type="binding site" evidence="1">
    <location>
        <position position="292"/>
    </location>
    <ligand>
        <name>Fe cation</name>
        <dbReference type="ChEBI" id="CHEBI:24875"/>
    </ligand>
</feature>